<comment type="function">
    <text evidence="1">This enzyme is involved in nucleotide metabolism: it produces dUMP, the immediate precursor of thymidine nucleotides and it decreases the intracellular concentration of dUTP so that uracil cannot be incorporated into DNA.</text>
</comment>
<comment type="catalytic activity">
    <reaction evidence="1">
        <text>dUTP + H2O = dUMP + diphosphate + H(+)</text>
        <dbReference type="Rhea" id="RHEA:10248"/>
        <dbReference type="ChEBI" id="CHEBI:15377"/>
        <dbReference type="ChEBI" id="CHEBI:15378"/>
        <dbReference type="ChEBI" id="CHEBI:33019"/>
        <dbReference type="ChEBI" id="CHEBI:61555"/>
        <dbReference type="ChEBI" id="CHEBI:246422"/>
        <dbReference type="EC" id="3.6.1.23"/>
    </reaction>
</comment>
<comment type="cofactor">
    <cofactor evidence="1">
        <name>Mg(2+)</name>
        <dbReference type="ChEBI" id="CHEBI:18420"/>
    </cofactor>
</comment>
<comment type="pathway">
    <text evidence="1">Pyrimidine metabolism; dUMP biosynthesis; dUMP from dCTP (dUTP route): step 2/2.</text>
</comment>
<comment type="similarity">
    <text evidence="1">Belongs to the dUTPase family.</text>
</comment>
<reference key="1">
    <citation type="submission" date="2007-11" db="EMBL/GenBank/DDBJ databases">
        <title>Genome sequencing of phylogenetically and phenotypically diverse Coxiella burnetii isolates.</title>
        <authorList>
            <person name="Seshadri R."/>
            <person name="Samuel J.E."/>
        </authorList>
    </citation>
    <scope>NUCLEOTIDE SEQUENCE [LARGE SCALE GENOMIC DNA]</scope>
    <source>
        <strain>RSA 331 / Henzerling II</strain>
    </source>
</reference>
<dbReference type="EC" id="3.6.1.23" evidence="1"/>
<dbReference type="EMBL" id="CP000890">
    <property type="protein sequence ID" value="ABX79021.1"/>
    <property type="molecule type" value="Genomic_DNA"/>
</dbReference>
<dbReference type="SMR" id="A9NB28"/>
<dbReference type="KEGG" id="cbs:COXBURSA331_A0398"/>
<dbReference type="HOGENOM" id="CLU_068508_1_1_6"/>
<dbReference type="UniPathway" id="UPA00610">
    <property type="reaction ID" value="UER00666"/>
</dbReference>
<dbReference type="GO" id="GO:0004170">
    <property type="term" value="F:dUTP diphosphatase activity"/>
    <property type="evidence" value="ECO:0007669"/>
    <property type="project" value="UniProtKB-UniRule"/>
</dbReference>
<dbReference type="GO" id="GO:0000287">
    <property type="term" value="F:magnesium ion binding"/>
    <property type="evidence" value="ECO:0007669"/>
    <property type="project" value="UniProtKB-UniRule"/>
</dbReference>
<dbReference type="GO" id="GO:0006226">
    <property type="term" value="P:dUMP biosynthetic process"/>
    <property type="evidence" value="ECO:0007669"/>
    <property type="project" value="UniProtKB-UniRule"/>
</dbReference>
<dbReference type="GO" id="GO:0046081">
    <property type="term" value="P:dUTP catabolic process"/>
    <property type="evidence" value="ECO:0007669"/>
    <property type="project" value="InterPro"/>
</dbReference>
<dbReference type="CDD" id="cd07557">
    <property type="entry name" value="trimeric_dUTPase"/>
    <property type="match status" value="1"/>
</dbReference>
<dbReference type="FunFam" id="2.70.40.10:FF:000002">
    <property type="entry name" value="dUTP diphosphatase"/>
    <property type="match status" value="1"/>
</dbReference>
<dbReference type="Gene3D" id="2.70.40.10">
    <property type="match status" value="1"/>
</dbReference>
<dbReference type="HAMAP" id="MF_00116">
    <property type="entry name" value="dUTPase_bact"/>
    <property type="match status" value="1"/>
</dbReference>
<dbReference type="InterPro" id="IPR008181">
    <property type="entry name" value="dUTPase"/>
</dbReference>
<dbReference type="InterPro" id="IPR029054">
    <property type="entry name" value="dUTPase-like"/>
</dbReference>
<dbReference type="InterPro" id="IPR036157">
    <property type="entry name" value="dUTPase-like_sf"/>
</dbReference>
<dbReference type="InterPro" id="IPR033704">
    <property type="entry name" value="dUTPase_trimeric"/>
</dbReference>
<dbReference type="NCBIfam" id="TIGR00576">
    <property type="entry name" value="dut"/>
    <property type="match status" value="1"/>
</dbReference>
<dbReference type="NCBIfam" id="NF001862">
    <property type="entry name" value="PRK00601.1"/>
    <property type="match status" value="1"/>
</dbReference>
<dbReference type="PANTHER" id="PTHR11241">
    <property type="entry name" value="DEOXYURIDINE 5'-TRIPHOSPHATE NUCLEOTIDOHYDROLASE"/>
    <property type="match status" value="1"/>
</dbReference>
<dbReference type="PANTHER" id="PTHR11241:SF0">
    <property type="entry name" value="DEOXYURIDINE 5'-TRIPHOSPHATE NUCLEOTIDOHYDROLASE"/>
    <property type="match status" value="1"/>
</dbReference>
<dbReference type="Pfam" id="PF00692">
    <property type="entry name" value="dUTPase"/>
    <property type="match status" value="1"/>
</dbReference>
<dbReference type="SUPFAM" id="SSF51283">
    <property type="entry name" value="dUTPase-like"/>
    <property type="match status" value="1"/>
</dbReference>
<name>DUT_COXBR</name>
<evidence type="ECO:0000255" key="1">
    <source>
        <dbReference type="HAMAP-Rule" id="MF_00116"/>
    </source>
</evidence>
<accession>A9NB28</accession>
<gene>
    <name evidence="1" type="primary">dut</name>
    <name type="ordered locus">COXBURSA331_A0398</name>
</gene>
<proteinExistence type="inferred from homology"/>
<protein>
    <recommendedName>
        <fullName evidence="1">Deoxyuridine 5'-triphosphate nucleotidohydrolase</fullName>
        <shortName evidence="1">dUTPase</shortName>
        <ecNumber evidence="1">3.6.1.23</ecNumber>
    </recommendedName>
    <alternativeName>
        <fullName evidence="1">dUTP pyrophosphatase</fullName>
    </alternativeName>
</protein>
<sequence>MTHSVQLKILDKRLGSEFPLPAYATTGSAGLDLRACLDEPLKIEPDETCLISTGLAIYLGHSNVAATILPRSGLGHKHGIVLGNLVGLIDSDYQGPLMVSCWNRGKEPYTINPGDRIAQLVVLPILKAQFAVVEEFELTERGAGGFGSSGQN</sequence>
<feature type="chain" id="PRO_1000076057" description="Deoxyuridine 5'-triphosphate nucleotidohydrolase">
    <location>
        <begin position="1"/>
        <end position="152"/>
    </location>
</feature>
<feature type="binding site" evidence="1">
    <location>
        <begin position="71"/>
        <end position="73"/>
    </location>
    <ligand>
        <name>substrate</name>
    </ligand>
</feature>
<feature type="binding site" evidence="1">
    <location>
        <position position="84"/>
    </location>
    <ligand>
        <name>substrate</name>
    </ligand>
</feature>
<feature type="binding site" evidence="1">
    <location>
        <begin position="88"/>
        <end position="90"/>
    </location>
    <ligand>
        <name>substrate</name>
    </ligand>
</feature>
<feature type="binding site" evidence="1">
    <location>
        <position position="98"/>
    </location>
    <ligand>
        <name>substrate</name>
    </ligand>
</feature>
<keyword id="KW-0378">Hydrolase</keyword>
<keyword id="KW-0460">Magnesium</keyword>
<keyword id="KW-0479">Metal-binding</keyword>
<keyword id="KW-0546">Nucleotide metabolism</keyword>
<organism>
    <name type="scientific">Coxiella burnetii (strain RSA 331 / Henzerling II)</name>
    <dbReference type="NCBI Taxonomy" id="360115"/>
    <lineage>
        <taxon>Bacteria</taxon>
        <taxon>Pseudomonadati</taxon>
        <taxon>Pseudomonadota</taxon>
        <taxon>Gammaproteobacteria</taxon>
        <taxon>Legionellales</taxon>
        <taxon>Coxiellaceae</taxon>
        <taxon>Coxiella</taxon>
    </lineage>
</organism>